<sequence length="640" mass="72529">MAQGSRAPSGPPLPVLPVDDWLNFRVDLFGDEHRRLLLEMLTQGCSNFVGLLNFGVPSPVYALEALVDFQVRNAFMKVKPVAQEIIRICILANHYRNSRDVLRDLRTQLDVLYSDPLKTRLLRGLIRLCRAAQTGVKPEDISVHLGADDVTFGVLKRALVRLHRVRDALGLRASPEAEARYPRLTTYNLLFHPPPFTTVEAVDLCAENLSDVTQRRNRPLRCLTSIKRPGSRTLEDALNDMYLLLTLRHLQLRHALELQMMQDWVVERCNRLCDALYFCYTQAPETRQTFVTLVRGLELARQHSSPAFQPMLYNLLQLLTQLHEANVYLCPGYLHFSAYKLLKKIQSVSDARERGEFGDEDEEQENDGEPREAQLDLEADPTAREGELFFFSKNLYGNGEVFRVPEQPSRYLRRRMFVERPETLQIFYNFHEGKITTETYHLQRIYSMMIEGASRQTGLTPKRFMELLDRAPLGQESEPEITEHRDLFADVFRRPVTDAASSSSASSSSSSASPNSVSLPSARSSSTRTTTPASTYTSAGTSSTTGLLLSSSLSGSHGISSADLEQPPRQRRRMVSVTLFSPYSVAYSHHRRHRRRRSPPPAPRGPAHTRFQGPDSMPSTSYGSDVEDPRDDLAENLRHL</sequence>
<feature type="chain" id="PRO_0000115318" description="Protein UL35">
    <location>
        <begin position="1"/>
        <end position="640"/>
    </location>
</feature>
<feature type="region of interest" description="Disordered" evidence="1">
    <location>
        <begin position="353"/>
        <end position="373"/>
    </location>
</feature>
<feature type="region of interest" description="Disordered" evidence="1">
    <location>
        <begin position="500"/>
        <end position="571"/>
    </location>
</feature>
<feature type="region of interest" description="Disordered" evidence="1">
    <location>
        <begin position="586"/>
        <end position="640"/>
    </location>
</feature>
<feature type="compositionally biased region" description="Acidic residues" evidence="1">
    <location>
        <begin position="358"/>
        <end position="367"/>
    </location>
</feature>
<feature type="compositionally biased region" description="Low complexity" evidence="1">
    <location>
        <begin position="500"/>
        <end position="562"/>
    </location>
</feature>
<feature type="compositionally biased region" description="Basic residues" evidence="1">
    <location>
        <begin position="588"/>
        <end position="598"/>
    </location>
</feature>
<feature type="compositionally biased region" description="Basic and acidic residues" evidence="1">
    <location>
        <begin position="631"/>
        <end position="640"/>
    </location>
</feature>
<feature type="splice variant" id="VSP_044013" description="In isoform UL35A." evidence="9">
    <location>
        <begin position="1"/>
        <end position="447"/>
    </location>
</feature>
<dbReference type="EMBL" id="X17403">
    <property type="protein sequence ID" value="CAA35394.1"/>
    <property type="molecule type" value="Genomic_DNA"/>
</dbReference>
<dbReference type="EMBL" id="BK000394">
    <property type="protein sequence ID" value="DAA00140.1"/>
    <property type="molecule type" value="Genomic_DNA"/>
</dbReference>
<dbReference type="PIR" id="S09798">
    <property type="entry name" value="QQBEU2"/>
</dbReference>
<dbReference type="SMR" id="P16766"/>
<dbReference type="Proteomes" id="UP000008991">
    <property type="component" value="Segment"/>
</dbReference>
<dbReference type="Proteomes" id="UP000008992">
    <property type="component" value="Segment"/>
</dbReference>
<dbReference type="GO" id="GO:0030430">
    <property type="term" value="C:host cell cytoplasm"/>
    <property type="evidence" value="ECO:0007669"/>
    <property type="project" value="UniProtKB-SubCell"/>
</dbReference>
<dbReference type="GO" id="GO:0042025">
    <property type="term" value="C:host cell nucleus"/>
    <property type="evidence" value="ECO:0000314"/>
    <property type="project" value="UniProtKB"/>
</dbReference>
<dbReference type="GO" id="GO:0019033">
    <property type="term" value="C:viral tegument"/>
    <property type="evidence" value="ECO:0007669"/>
    <property type="project" value="UniProtKB-SubCell"/>
</dbReference>
<dbReference type="GO" id="GO:0039695">
    <property type="term" value="P:DNA-templated viral transcription"/>
    <property type="evidence" value="ECO:0000314"/>
    <property type="project" value="UniProtKB"/>
</dbReference>
<dbReference type="GO" id="GO:0039723">
    <property type="term" value="P:symbiont-mediated suppression of host cytoplasmic pattern recognition receptor signaling pathway via inhibition of TBK1 activity"/>
    <property type="evidence" value="ECO:0007669"/>
    <property type="project" value="UniProtKB-KW"/>
</dbReference>
<dbReference type="GO" id="GO:0039722">
    <property type="term" value="P:symbiont-mediated suppression of host toll-like receptor signaling pathway"/>
    <property type="evidence" value="ECO:0007669"/>
    <property type="project" value="UniProtKB-KW"/>
</dbReference>
<dbReference type="InterPro" id="IPR006731">
    <property type="entry name" value="Herpes_pp85"/>
</dbReference>
<dbReference type="Pfam" id="PF04637">
    <property type="entry name" value="Herpes_pp85"/>
    <property type="match status" value="1"/>
</dbReference>
<comment type="function">
    <molecule>Isoform UL35</molecule>
    <text evidence="5 6 7 8">Plays important role in immediate-early gene expression through interaction with UL82. Forms nuclear bodies in host nucleus, independently of PML. In turn, UL35 nuclear bodies associate with and remodel PML bodies (PubMed:21489587, PubMed:22072767). Through interaction with host DCAF1, causes cells to accumulate in the G2 phase of the cell cycle by inducing a DNA damage response (PubMed:22072767). Regulates viral assembly by controlling the localization of the essential gB through regulation of a retrograde transport pathway. This modulation occurs via binding and inhibition of host sorting nexin 5/SNX5 (PubMed:29444945). Also plays a role in the inhibition of pattern recognition receptor-mediated type I interferon signaling at the level of TBK1 (PubMed:32466380).</text>
</comment>
<comment type="function">
    <molecule>Isoform UL35A</molecule>
    <text evidence="5 7">Promotes cytoplasmic UL82 accumulation and inhibits UL35-containing nuclear bodies formation (PubMed:21489587). Regulates viral assembly by controlling the localization of the essential gB through regulation of a retrograde transport pathway. This modulation occurs via binding and inhibition of host sorting nexin 5/SNX5 (PubMed:29444945).</text>
</comment>
<comment type="subunit">
    <molecule>Protein UL35</molecule>
    <text evidence="3 6 7 8">Interacts with UL82 (PubMed:15308743). Interacts with isoform UL35A. Interacts with host UBP7; this interaction significantly inhibits the ability of USP7 to form nuclear bodies (PubMed:22072767). Interacts with host DCAF1 (via C-terminus) (PubMed:22072767). Interacts with host SNX5; this interaction allows proper gB localization during viral assembly (PubMed:29444945). Interacts with host TBK1; this interaction prevents type I interferon production (PubMed:32466380).</text>
</comment>
<comment type="subunit">
    <molecule>Isoform UL35A</molecule>
    <text evidence="3 6 7">Interacts with UL82. Interacts with isoform UL35. Interacts with host UBP7; this interaction significantly inhibits the ability of USP7 to form nuclear bodies (PubMed:22072767). Interacts with host SNX5; this interaction allows proper gB localization during viral assembly (PubMed:29444945).</text>
</comment>
<comment type="subcellular location">
    <molecule>Isoform UL35</molecule>
    <subcellularLocation>
        <location evidence="4">Virion tegument</location>
    </subcellularLocation>
    <subcellularLocation>
        <location evidence="2 5 6 8">Host nucleus</location>
    </subcellularLocation>
    <subcellularLocation>
        <location evidence="5 8">Host cytoplasm</location>
    </subcellularLocation>
    <text evidence="5">Found in nuclear bodies.</text>
</comment>
<comment type="subcellular location">
    <molecule>Isoform UL35A</molecule>
    <subcellularLocation>
        <location evidence="2 5">Host nucleus</location>
    </subcellularLocation>
    <subcellularLocation>
        <location evidence="5">Host cytoplasm</location>
    </subcellularLocation>
</comment>
<comment type="alternative products">
    <event type="alternative initiation"/>
    <isoform>
        <id>P16766-1</id>
        <name>UL35</name>
        <sequence type="displayed"/>
    </isoform>
    <isoform>
        <id>P16766-2</id>
        <name>UL35A</name>
        <sequence type="described" ref="VSP_044013"/>
    </isoform>
</comment>
<comment type="similarity">
    <text evidence="9">Belongs to the herpesviridae pp85 family.</text>
</comment>
<reference key="1">
    <citation type="journal article" date="1990" name="Curr. Top. Microbiol. Immunol.">
        <title>Analysis of the protein-coding content of the sequence of human cytomegalovirus strain AD169.</title>
        <authorList>
            <person name="Chee M.S."/>
            <person name="Bankier A.T."/>
            <person name="Beck S."/>
            <person name="Bohni R."/>
            <person name="Brown C.M."/>
            <person name="Cerny R."/>
            <person name="Horsnell T."/>
            <person name="Hutchison C.A. III"/>
            <person name="Kouzarides T."/>
            <person name="Martignetti J.A."/>
            <person name="Preddie E."/>
            <person name="Satchwell S.C."/>
            <person name="Tomlinson P."/>
            <person name="Weston K.M."/>
            <person name="Barrell B.G."/>
        </authorList>
    </citation>
    <scope>NUCLEOTIDE SEQUENCE [LARGE SCALE GENOMIC DNA]</scope>
</reference>
<reference key="2">
    <citation type="journal article" date="2003" name="J. Gen. Virol.">
        <title>The human cytomegalovirus genome revisited: comparison with the chimpanzee cytomegalovirus genome.</title>
        <authorList>
            <person name="Davison A.J."/>
            <person name="Dolan A."/>
            <person name="Akter P."/>
            <person name="Addison C."/>
            <person name="Dargan D.J."/>
            <person name="Alcendor D.J."/>
            <person name="McGeoch D.J."/>
            <person name="Hayward G.S."/>
        </authorList>
    </citation>
    <scope>GENOME REANNOTATION</scope>
</reference>
<reference key="3">
    <citation type="journal article" date="2003" name="J. Gen. Virol.">
        <authorList>
            <person name="Davison A.J."/>
            <person name="Dolan A."/>
            <person name="Akter P."/>
            <person name="Addison C."/>
            <person name="Dargan D.J."/>
            <person name="Alcendor D.J."/>
            <person name="McGeoch D.J."/>
            <person name="Hayward G.S."/>
        </authorList>
    </citation>
    <scope>ERRATUM OF PUBMED:12533697</scope>
</reference>
<reference key="4">
    <citation type="journal article" date="2002" name="J. Virol.">
        <title>The human cytomegalovirus UL35 gene encodes two proteins with different functions.</title>
        <authorList>
            <person name="Liu Y."/>
            <person name="Biegalke B.J."/>
        </authorList>
    </citation>
    <scope>ISOFORM UL35A</scope>
    <scope>SUBCELLULAR LOCATION</scope>
</reference>
<reference key="5">
    <citation type="journal article" date="2004" name="J. Virol.">
        <title>Identification of proteins in human cytomegalovirus (HCMV) particles: the HCMV proteome.</title>
        <authorList>
            <person name="Varnum S.M."/>
            <person name="Streblow D.N."/>
            <person name="Monroe M.E."/>
            <person name="Smith P."/>
            <person name="Auberry K.J."/>
            <person name="Pasa-Tolic L."/>
            <person name="Wang D."/>
            <person name="Camp D.G. II"/>
            <person name="Rodland K."/>
            <person name="Wiley S."/>
            <person name="Britt W."/>
            <person name="Shenk T."/>
            <person name="Smith R.D."/>
            <person name="Nelson J.A."/>
        </authorList>
    </citation>
    <scope>IDENTIFICATION</scope>
    <scope>SUBCELLULAR LOCATION</scope>
</reference>
<reference key="6">
    <citation type="journal article" date="2004" name="J. Virol.">
        <authorList>
            <person name="Varnum S.M."/>
            <person name="Streblow D.N."/>
            <person name="Monroe M.E."/>
            <person name="Smith P."/>
            <person name="Auberry K.J."/>
            <person name="Pasa-Tolic L."/>
            <person name="Wang D."/>
            <person name="Camp D.G. II"/>
            <person name="Rodland K."/>
            <person name="Wiley S."/>
            <person name="Britt W."/>
            <person name="Shenk T."/>
            <person name="Smith R.D."/>
            <person name="Nelson J.A."/>
        </authorList>
    </citation>
    <scope>ERRATUM OF PUBMED:15452216</scope>
</reference>
<reference key="7">
    <citation type="journal article" date="2004" name="J. Virol.">
        <title>Human cytomegalovirus tegument proteins ppUL82 (pp71) and ppUL35 interact and cooperatively activate the major immediate-early enhancer.</title>
        <authorList>
            <person name="Schierling K."/>
            <person name="Stamminger T."/>
            <person name="Mertens T."/>
            <person name="Winkler M."/>
        </authorList>
    </citation>
    <scope>INTERACTION WITH UL82</scope>
</reference>
<reference key="8">
    <citation type="journal article" date="2005" name="J. Virol.">
        <title>Human cytomegalovirus tegument protein ppUL35 is important for viral replication and particle formation.</title>
        <authorList>
            <person name="Schierling K."/>
            <person name="Buser C."/>
            <person name="Mertens T."/>
            <person name="Winkler M."/>
        </authorList>
    </citation>
    <scope>FUNCTION</scope>
</reference>
<reference key="9">
    <citation type="journal article" date="2011" name="Virology">
        <title>Nuclear body formation and PML body remodeling by the human cytomegalovirus protein UL35.</title>
        <authorList>
            <person name="Salsman J."/>
            <person name="Wang X."/>
            <person name="Frappier L."/>
        </authorList>
    </citation>
    <scope>FUNCTION</scope>
    <scope>SUBCELLULAR LOCATION</scope>
</reference>
<reference key="10">
    <citation type="journal article" date="2012" name="J. Virol.">
        <title>Proteomic profiling of the human cytomegalovirus UL35 gene products reveals a role for UL35 in the DNA repair response.</title>
        <authorList>
            <person name="Salsman J."/>
            <person name="Jagannathan M."/>
            <person name="Paladino P."/>
            <person name="Chan P.K."/>
            <person name="Dellaire G."/>
            <person name="Raught B."/>
            <person name="Frappier L."/>
        </authorList>
    </citation>
    <scope>FUNCTION</scope>
    <scope>INTERACTION WITH HOST UBP7 AND DCAF1 (ISOFORM UL35)</scope>
    <scope>INTERACTION WITH HOST UBP7 (ISOFORM UL35A)</scope>
    <scope>SUBCELLULAR LOCATION</scope>
</reference>
<reference key="11">
    <citation type="journal article" date="2018" name="J. Virol.">
        <title>Interaction of Human Cytomegalovirus Tegument Proteins ppUL35 and ppUL35A with Sorting Nexin 5 Regulates Glycoprotein B (gpUL55) Localization.</title>
        <authorList>
            <person name="Maschkowitz G."/>
            <person name="Gaertner S."/>
            <person name="Hofmann-Winkler H."/>
            <person name="Fickenscher H."/>
            <person name="Winkler M."/>
        </authorList>
    </citation>
    <scope>FUNCTION (ISOFORM UL35)</scope>
    <scope>FUNCTION (ISOFORM UL35A)</scope>
    <scope>INTERACTION WITH HOST SNX5 (ISOFORM UL35)</scope>
    <scope>INTERACTION WITH HOST SNX5 (ISOFORM UL35A)</scope>
</reference>
<reference key="12">
    <citation type="journal article" date="2020" name="Microorganisms">
        <title>The Cytomegalovirus Tegument Protein UL35 Antagonizes Pattern Recognition Receptor-Mediated Type I IFN Transcription.</title>
        <authorList>
            <person name="Fabits M."/>
            <person name="Goncalves Magalhaes V."/>
            <person name="Chan B."/>
            <person name="Girault V."/>
            <person name="Elbasani E."/>
            <person name="Rossetti E."/>
            <person name="Saeland E."/>
            <person name="Messerle M."/>
            <person name="Pichlmair A."/>
            <person name="Lisnic V.J."/>
            <person name="Brinkmann M.M."/>
        </authorList>
    </citation>
    <scope>FUNCTION (ISOFORM UL35)</scope>
    <scope>INTERACTION WITH HOST TBK1 (ISOFORM UL35)</scope>
    <scope>SUBCELLULAR LOCATION (ISOFORM UL35)</scope>
</reference>
<organismHost>
    <name type="scientific">Homo sapiens</name>
    <name type="common">Human</name>
    <dbReference type="NCBI Taxonomy" id="9606"/>
</organismHost>
<accession>P16766</accession>
<accession>Q7M6P8</accession>
<gene>
    <name type="primary">UL35</name>
</gene>
<organism>
    <name type="scientific">Human cytomegalovirus (strain AD169)</name>
    <name type="common">HHV-5</name>
    <name type="synonym">Human herpesvirus 5</name>
    <dbReference type="NCBI Taxonomy" id="10360"/>
    <lineage>
        <taxon>Viruses</taxon>
        <taxon>Duplodnaviria</taxon>
        <taxon>Heunggongvirae</taxon>
        <taxon>Peploviricota</taxon>
        <taxon>Herviviricetes</taxon>
        <taxon>Herpesvirales</taxon>
        <taxon>Orthoherpesviridae</taxon>
        <taxon>Betaherpesvirinae</taxon>
        <taxon>Cytomegalovirus</taxon>
        <taxon>Cytomegalovirus humanbeta5</taxon>
        <taxon>Human cytomegalovirus</taxon>
    </lineage>
</organism>
<proteinExistence type="evidence at protein level"/>
<evidence type="ECO:0000256" key="1">
    <source>
        <dbReference type="SAM" id="MobiDB-lite"/>
    </source>
</evidence>
<evidence type="ECO:0000269" key="2">
    <source>
    </source>
</evidence>
<evidence type="ECO:0000269" key="3">
    <source>
    </source>
</evidence>
<evidence type="ECO:0000269" key="4">
    <source>
    </source>
</evidence>
<evidence type="ECO:0000269" key="5">
    <source>
    </source>
</evidence>
<evidence type="ECO:0000269" key="6">
    <source>
    </source>
</evidence>
<evidence type="ECO:0000269" key="7">
    <source>
    </source>
</evidence>
<evidence type="ECO:0000269" key="8">
    <source>
    </source>
</evidence>
<evidence type="ECO:0000305" key="9"/>
<keyword id="KW-0024">Alternative initiation</keyword>
<keyword id="KW-1035">Host cytoplasm</keyword>
<keyword id="KW-1048">Host nucleus</keyword>
<keyword id="KW-0945">Host-virus interaction</keyword>
<keyword id="KW-1090">Inhibition of host innate immune response by virus</keyword>
<keyword id="KW-1223">Inhibition of host TBK1 by virus</keyword>
<keyword id="KW-1225">Inhibition of host TLR pathway by virus</keyword>
<keyword id="KW-1185">Reference proteome</keyword>
<keyword id="KW-0899">Viral immunoevasion</keyword>
<keyword id="KW-0946">Virion</keyword>
<keyword id="KW-0920">Virion tegument</keyword>
<protein>
    <recommendedName>
        <fullName>Protein UL35</fullName>
    </recommendedName>
</protein>
<name>UL35_HCMVA</name>